<accession>A6UTK3</accession>
<feature type="chain" id="PRO_0000334843" description="Leucine--tRNA ligase">
    <location>
        <begin position="1"/>
        <end position="969"/>
    </location>
</feature>
<feature type="short sequence motif" description="'HIGH' region">
    <location>
        <begin position="46"/>
        <end position="56"/>
    </location>
</feature>
<feature type="short sequence motif" description="'KMSKS' region">
    <location>
        <begin position="658"/>
        <end position="662"/>
    </location>
</feature>
<feature type="binding site" evidence="1">
    <location>
        <position position="661"/>
    </location>
    <ligand>
        <name>ATP</name>
        <dbReference type="ChEBI" id="CHEBI:30616"/>
    </ligand>
</feature>
<protein>
    <recommendedName>
        <fullName evidence="1">Leucine--tRNA ligase</fullName>
        <ecNumber evidence="1">6.1.1.4</ecNumber>
    </recommendedName>
    <alternativeName>
        <fullName evidence="1">Leucyl-tRNA synthetase</fullName>
        <shortName evidence="1">LeuRS</shortName>
    </alternativeName>
</protein>
<keyword id="KW-0030">Aminoacyl-tRNA synthetase</keyword>
<keyword id="KW-0067">ATP-binding</keyword>
<keyword id="KW-0963">Cytoplasm</keyword>
<keyword id="KW-0436">Ligase</keyword>
<keyword id="KW-0547">Nucleotide-binding</keyword>
<keyword id="KW-0648">Protein biosynthesis</keyword>
<reference key="1">
    <citation type="submission" date="2007-06" db="EMBL/GenBank/DDBJ databases">
        <title>Complete sequence of Methanococcus aeolicus Nankai-3.</title>
        <authorList>
            <consortium name="US DOE Joint Genome Institute"/>
            <person name="Copeland A."/>
            <person name="Lucas S."/>
            <person name="Lapidus A."/>
            <person name="Barry K."/>
            <person name="Glavina del Rio T."/>
            <person name="Dalin E."/>
            <person name="Tice H."/>
            <person name="Pitluck S."/>
            <person name="Chain P."/>
            <person name="Malfatti S."/>
            <person name="Shin M."/>
            <person name="Vergez L."/>
            <person name="Schmutz J."/>
            <person name="Larimer F."/>
            <person name="Land M."/>
            <person name="Hauser L."/>
            <person name="Kyrpides N."/>
            <person name="Lykidis A."/>
            <person name="Sieprawska-Lupa M."/>
            <person name="Whitman W.B."/>
            <person name="Richardson P."/>
        </authorList>
    </citation>
    <scope>NUCLEOTIDE SEQUENCE [LARGE SCALE GENOMIC DNA]</scope>
    <source>
        <strain>ATCC BAA-1280 / DSM 17508 / OCM 812 / Nankai-3</strain>
    </source>
</reference>
<dbReference type="EC" id="6.1.1.4" evidence="1"/>
<dbReference type="EMBL" id="CP000743">
    <property type="protein sequence ID" value="ABR55825.1"/>
    <property type="molecule type" value="Genomic_DNA"/>
</dbReference>
<dbReference type="RefSeq" id="WP_011972957.1">
    <property type="nucleotide sequence ID" value="NC_009635.1"/>
</dbReference>
<dbReference type="SMR" id="A6UTK3"/>
<dbReference type="STRING" id="419665.Maeo_0233"/>
<dbReference type="GeneID" id="5326548"/>
<dbReference type="KEGG" id="mae:Maeo_0233"/>
<dbReference type="eggNOG" id="arCOG00809">
    <property type="taxonomic scope" value="Archaea"/>
</dbReference>
<dbReference type="HOGENOM" id="CLU_004174_0_0_2"/>
<dbReference type="Proteomes" id="UP000001106">
    <property type="component" value="Chromosome"/>
</dbReference>
<dbReference type="GO" id="GO:0005737">
    <property type="term" value="C:cytoplasm"/>
    <property type="evidence" value="ECO:0007669"/>
    <property type="project" value="UniProtKB-SubCell"/>
</dbReference>
<dbReference type="GO" id="GO:0002161">
    <property type="term" value="F:aminoacyl-tRNA deacylase activity"/>
    <property type="evidence" value="ECO:0007669"/>
    <property type="project" value="InterPro"/>
</dbReference>
<dbReference type="GO" id="GO:0005524">
    <property type="term" value="F:ATP binding"/>
    <property type="evidence" value="ECO:0007669"/>
    <property type="project" value="UniProtKB-UniRule"/>
</dbReference>
<dbReference type="GO" id="GO:0004823">
    <property type="term" value="F:leucine-tRNA ligase activity"/>
    <property type="evidence" value="ECO:0007669"/>
    <property type="project" value="UniProtKB-UniRule"/>
</dbReference>
<dbReference type="GO" id="GO:0006429">
    <property type="term" value="P:leucyl-tRNA aminoacylation"/>
    <property type="evidence" value="ECO:0007669"/>
    <property type="project" value="UniProtKB-UniRule"/>
</dbReference>
<dbReference type="CDD" id="cd07959">
    <property type="entry name" value="Anticodon_Ia_Leu_AEc"/>
    <property type="match status" value="1"/>
</dbReference>
<dbReference type="Gene3D" id="3.30.2320.20">
    <property type="entry name" value="Class I aminoacyl-tRNA synthetases (RS)"/>
    <property type="match status" value="1"/>
</dbReference>
<dbReference type="Gene3D" id="3.40.50.620">
    <property type="entry name" value="HUPs"/>
    <property type="match status" value="1"/>
</dbReference>
<dbReference type="Gene3D" id="1.10.730.10">
    <property type="entry name" value="Isoleucyl-tRNA Synthetase, Domain 1"/>
    <property type="match status" value="1"/>
</dbReference>
<dbReference type="Gene3D" id="1.10.10.720">
    <property type="entry name" value="leucyl-tRNA synthetase"/>
    <property type="match status" value="1"/>
</dbReference>
<dbReference type="Gene3D" id="3.90.740.10">
    <property type="entry name" value="Valyl/Leucyl/Isoleucyl-tRNA synthetase, editing domain"/>
    <property type="match status" value="1"/>
</dbReference>
<dbReference type="HAMAP" id="MF_00049_A">
    <property type="entry name" value="Leu_tRNA_synth_A"/>
    <property type="match status" value="1"/>
</dbReference>
<dbReference type="InterPro" id="IPR001412">
    <property type="entry name" value="aa-tRNA-synth_I_CS"/>
</dbReference>
<dbReference type="InterPro" id="IPR002300">
    <property type="entry name" value="aa-tRNA-synth_Ia"/>
</dbReference>
<dbReference type="InterPro" id="IPR020791">
    <property type="entry name" value="Leu-tRNA-lgase_arc"/>
</dbReference>
<dbReference type="InterPro" id="IPR004493">
    <property type="entry name" value="Leu-tRNA-synth_Ia_arc/euk"/>
</dbReference>
<dbReference type="InterPro" id="IPR013155">
    <property type="entry name" value="M/V/L/I-tRNA-synth_anticd-bd"/>
</dbReference>
<dbReference type="InterPro" id="IPR014729">
    <property type="entry name" value="Rossmann-like_a/b/a_fold"/>
</dbReference>
<dbReference type="InterPro" id="IPR009080">
    <property type="entry name" value="tRNAsynth_Ia_anticodon-bd"/>
</dbReference>
<dbReference type="InterPro" id="IPR009008">
    <property type="entry name" value="Val/Leu/Ile-tRNA-synth_edit"/>
</dbReference>
<dbReference type="NCBIfam" id="TIGR00395">
    <property type="entry name" value="leuS_arch"/>
    <property type="match status" value="1"/>
</dbReference>
<dbReference type="NCBIfam" id="NF008957">
    <property type="entry name" value="PRK12300.1"/>
    <property type="match status" value="1"/>
</dbReference>
<dbReference type="PANTHER" id="PTHR45794:SF1">
    <property type="entry name" value="LEUCINE--TRNA LIGASE, CYTOPLASMIC"/>
    <property type="match status" value="1"/>
</dbReference>
<dbReference type="PANTHER" id="PTHR45794">
    <property type="entry name" value="LEUCYL-TRNA SYNTHETASE"/>
    <property type="match status" value="1"/>
</dbReference>
<dbReference type="Pfam" id="PF08264">
    <property type="entry name" value="Anticodon_1"/>
    <property type="match status" value="1"/>
</dbReference>
<dbReference type="Pfam" id="PF00133">
    <property type="entry name" value="tRNA-synt_1"/>
    <property type="match status" value="1"/>
</dbReference>
<dbReference type="SUPFAM" id="SSF47323">
    <property type="entry name" value="Anticodon-binding domain of a subclass of class I aminoacyl-tRNA synthetases"/>
    <property type="match status" value="1"/>
</dbReference>
<dbReference type="SUPFAM" id="SSF52374">
    <property type="entry name" value="Nucleotidylyl transferase"/>
    <property type="match status" value="1"/>
</dbReference>
<dbReference type="SUPFAM" id="SSF50677">
    <property type="entry name" value="ValRS/IleRS/LeuRS editing domain"/>
    <property type="match status" value="1"/>
</dbReference>
<dbReference type="PROSITE" id="PS00178">
    <property type="entry name" value="AA_TRNA_LIGASE_I"/>
    <property type="match status" value="1"/>
</dbReference>
<organism>
    <name type="scientific">Methanococcus aeolicus (strain ATCC BAA-1280 / DSM 17508 / OCM 812 / Nankai-3)</name>
    <dbReference type="NCBI Taxonomy" id="419665"/>
    <lineage>
        <taxon>Archaea</taxon>
        <taxon>Methanobacteriati</taxon>
        <taxon>Methanobacteriota</taxon>
        <taxon>Methanomada group</taxon>
        <taxon>Methanococci</taxon>
        <taxon>Methanococcales</taxon>
        <taxon>Methanococcaceae</taxon>
        <taxon>Methanococcus</taxon>
    </lineage>
</organism>
<gene>
    <name evidence="1" type="primary">leuS</name>
    <name type="ordered locus">Maeo_0233</name>
</gene>
<evidence type="ECO:0000255" key="1">
    <source>
        <dbReference type="HAMAP-Rule" id="MF_00049"/>
    </source>
</evidence>
<comment type="catalytic activity">
    <reaction evidence="1">
        <text>tRNA(Leu) + L-leucine + ATP = L-leucyl-tRNA(Leu) + AMP + diphosphate</text>
        <dbReference type="Rhea" id="RHEA:11688"/>
        <dbReference type="Rhea" id="RHEA-COMP:9613"/>
        <dbReference type="Rhea" id="RHEA-COMP:9622"/>
        <dbReference type="ChEBI" id="CHEBI:30616"/>
        <dbReference type="ChEBI" id="CHEBI:33019"/>
        <dbReference type="ChEBI" id="CHEBI:57427"/>
        <dbReference type="ChEBI" id="CHEBI:78442"/>
        <dbReference type="ChEBI" id="CHEBI:78494"/>
        <dbReference type="ChEBI" id="CHEBI:456215"/>
        <dbReference type="EC" id="6.1.1.4"/>
    </reaction>
</comment>
<comment type="subcellular location">
    <subcellularLocation>
        <location evidence="1">Cytoplasm</location>
    </subcellularLocation>
</comment>
<comment type="similarity">
    <text evidence="1">Belongs to the class-I aminoacyl-tRNA synthetase family.</text>
</comment>
<proteinExistence type="inferred from homology"/>
<sequence length="969" mass="112812">MSVDFVKIAEKWQKRWEEDKIFENPSKLKYTEQEKKDKFFITAAFPYLNGVLHAGHLRTFTIPEITARYQRMNNKTVLWTFGFHVSGTPIIGLAELLKKQAPETIWAYNKLHNIPMGELQTLTTPENIVNYFSKKATESFKKMGFALDWRRNFKTDDETFKKFVEWQFLKLKEKNLIVKGSHPVRYCPSCDNPVEDHDLLKGEEATLQEYILLKFKTKLNIEIDGEDKEYECIIPMATLRPETIYGVVNAWINPNDTYHIIKVYDEVQSQEEGSDEISLKYNGIWIVSKEASDKLKNQDRTVELIKEIKGEELVGKIVINPVNNKEVPLYPADFVSSEMGTGCVMSVPAHAPKDFVALRDYYSSINKELTDDELISLIKIDGYGKYPAKEIVEKMGITNQKDEKLEDATHTIYKQEFHKGILNENCGEYEGIAVRDIKDKLASDFINNNMAETLQEFSIPEVVCRCGEKCIVKTVKGQWFITYSDLEWKKKAHNWVDKMNFVPETIRMDFHNKIDWMKDKACARKKGLGTRFPFDKDWVIESLSDSTLYMAYYTVAKTINTNNILPEQLIPELFDYVYYGKGDINEISNNTKIPVELINEMRNEFEYYYPLDWRCSAKDLVPNHLTFMIFNHVALFDDEKYYPKGIVVNGYVTIEGKKLSKSKGPVLPIEEVATNYGPDVGRFYITTCAELPHDADVKFKEMEHARDNLIRFYELATELKDTEKTITELSTIDKWLLHKVHSDLKIINESYNEFQLRKIGTLFYGLTHNLKWYKRRGGNNNQLLKYVVEIWTKVLAPITPHLCEEIWEMFGYNKNNNYISNETFPQLDNSYINENCELGEEFIKNTMDDIRNIINIANIAPKTIYLYTADDWKFEVLKIMMENKGAPVNKMMPLIMKNAELRRYGKEIPKLINEIVKNGISNPIDEENILNDAKQFLENEFQCKIIVNGEDIGNKKRFAIPNKVAIYIE</sequence>
<name>SYL_META3</name>